<protein>
    <recommendedName>
        <fullName>Geranylgeranyl pyrophosphate synthase 9, chloroplastic</fullName>
        <shortName>GGPP synthase 9</shortName>
        <shortName>GGPS9</shortName>
        <ecNumber>2.5.1.-</ecNumber>
    </recommendedName>
    <alternativeName>
        <fullName>(2E,6E)-farnesyl diphosphate synthase 9</fullName>
    </alternativeName>
    <alternativeName>
        <fullName>Dimethylallyltranstransferase 9</fullName>
        <ecNumber>2.5.1.1</ecNumber>
    </alternativeName>
    <alternativeName>
        <fullName>Farnesyl diphosphate synthase 9</fullName>
    </alternativeName>
    <alternativeName>
        <fullName>Farnesyltranstransferase 9</fullName>
        <ecNumber>2.5.1.29</ecNumber>
    </alternativeName>
    <alternativeName>
        <fullName>Geranyltranstransferase 9</fullName>
        <ecNumber>2.5.1.10</ecNumber>
    </alternativeName>
</protein>
<gene>
    <name type="primary">GGPPS9</name>
    <name type="synonym">GGPPS6</name>
    <name type="ordered locus">At3g14530</name>
    <name type="ORF">MIE1.3</name>
</gene>
<keyword id="KW-0125">Carotenoid biosynthesis</keyword>
<keyword id="KW-0150">Chloroplast</keyword>
<keyword id="KW-0414">Isoprene biosynthesis</keyword>
<keyword id="KW-0460">Magnesium</keyword>
<keyword id="KW-0479">Metal-binding</keyword>
<keyword id="KW-0934">Plastid</keyword>
<keyword id="KW-1185">Reference proteome</keyword>
<keyword id="KW-0808">Transferase</keyword>
<keyword id="KW-0809">Transit peptide</keyword>
<comment type="function">
    <text evidence="1">Catalyzes the trans-addition of the three molecules of IPP onto DMAPP to form geranylgeranyl pyrophosphate.</text>
</comment>
<comment type="catalytic activity">
    <reaction>
        <text>isopentenyl diphosphate + dimethylallyl diphosphate = (2E)-geranyl diphosphate + diphosphate</text>
        <dbReference type="Rhea" id="RHEA:22408"/>
        <dbReference type="ChEBI" id="CHEBI:33019"/>
        <dbReference type="ChEBI" id="CHEBI:57623"/>
        <dbReference type="ChEBI" id="CHEBI:58057"/>
        <dbReference type="ChEBI" id="CHEBI:128769"/>
        <dbReference type="EC" id="2.5.1.1"/>
    </reaction>
</comment>
<comment type="catalytic activity">
    <reaction>
        <text>isopentenyl diphosphate + (2E)-geranyl diphosphate = (2E,6E)-farnesyl diphosphate + diphosphate</text>
        <dbReference type="Rhea" id="RHEA:19361"/>
        <dbReference type="ChEBI" id="CHEBI:33019"/>
        <dbReference type="ChEBI" id="CHEBI:58057"/>
        <dbReference type="ChEBI" id="CHEBI:128769"/>
        <dbReference type="ChEBI" id="CHEBI:175763"/>
        <dbReference type="EC" id="2.5.1.10"/>
    </reaction>
</comment>
<comment type="catalytic activity">
    <reaction>
        <text>isopentenyl diphosphate + (2E,6E)-farnesyl diphosphate = (2E,6E,10E)-geranylgeranyl diphosphate + diphosphate</text>
        <dbReference type="Rhea" id="RHEA:17653"/>
        <dbReference type="ChEBI" id="CHEBI:33019"/>
        <dbReference type="ChEBI" id="CHEBI:58756"/>
        <dbReference type="ChEBI" id="CHEBI:128769"/>
        <dbReference type="ChEBI" id="CHEBI:175763"/>
        <dbReference type="EC" id="2.5.1.29"/>
    </reaction>
</comment>
<comment type="cofactor">
    <cofactor evidence="1">
        <name>Mg(2+)</name>
        <dbReference type="ChEBI" id="CHEBI:18420"/>
    </cofactor>
    <text evidence="1">Binds 2 Mg(2+) ions per subunit.</text>
</comment>
<comment type="pathway">
    <text>Isoprenoid biosynthesis; farnesyl diphosphate biosynthesis; farnesyl diphosphate from geranyl diphosphate and isopentenyl diphosphate: step 1/1.</text>
</comment>
<comment type="pathway">
    <text>Isoprenoid biosynthesis; geranyl diphosphate biosynthesis; geranyl diphosphate from dimethylallyl diphosphate and isopentenyl diphosphate: step 1/1.</text>
</comment>
<comment type="pathway">
    <text>Isoprenoid biosynthesis; geranylgeranyl diphosphate biosynthesis; geranylgeranyl diphosphate from farnesyl diphosphate and isopentenyl diphosphate: step 1/1.</text>
</comment>
<comment type="subunit">
    <text evidence="1">Monomer (By similarity). No interactions with GGR.</text>
</comment>
<comment type="subcellular location">
    <subcellularLocation>
        <location evidence="5">Plastid</location>
        <location evidence="5">Chloroplast</location>
    </subcellularLocation>
</comment>
<comment type="similarity">
    <text evidence="5">Belongs to the FPP/GGPP synthase family.</text>
</comment>
<organism>
    <name type="scientific">Arabidopsis thaliana</name>
    <name type="common">Mouse-ear cress</name>
    <dbReference type="NCBI Taxonomy" id="3702"/>
    <lineage>
        <taxon>Eukaryota</taxon>
        <taxon>Viridiplantae</taxon>
        <taxon>Streptophyta</taxon>
        <taxon>Embryophyta</taxon>
        <taxon>Tracheophyta</taxon>
        <taxon>Spermatophyta</taxon>
        <taxon>Magnoliopsida</taxon>
        <taxon>eudicotyledons</taxon>
        <taxon>Gunneridae</taxon>
        <taxon>Pentapetalae</taxon>
        <taxon>rosids</taxon>
        <taxon>malvids</taxon>
        <taxon>Brassicales</taxon>
        <taxon>Brassicaceae</taxon>
        <taxon>Camelineae</taxon>
        <taxon>Arabidopsis</taxon>
    </lineage>
</organism>
<accession>Q9LUE1</accession>
<reference key="1">
    <citation type="journal article" date="2000" name="DNA Res.">
        <title>Structural analysis of Arabidopsis thaliana chromosome 3. I. Sequence features of the regions of 4,504,864 bp covered by sixty P1 and TAC clones.</title>
        <authorList>
            <person name="Sato S."/>
            <person name="Nakamura Y."/>
            <person name="Kaneko T."/>
            <person name="Katoh T."/>
            <person name="Asamizu E."/>
            <person name="Tabata S."/>
        </authorList>
    </citation>
    <scope>NUCLEOTIDE SEQUENCE [LARGE SCALE GENOMIC DNA]</scope>
    <source>
        <strain>cv. Columbia</strain>
    </source>
</reference>
<reference key="2">
    <citation type="journal article" date="2017" name="Plant J.">
        <title>Araport11: a complete reannotation of the Arabidopsis thaliana reference genome.</title>
        <authorList>
            <person name="Cheng C.Y."/>
            <person name="Krishnakumar V."/>
            <person name="Chan A.P."/>
            <person name="Thibaud-Nissen F."/>
            <person name="Schobel S."/>
            <person name="Town C.D."/>
        </authorList>
    </citation>
    <scope>GENOME REANNOTATION</scope>
    <source>
        <strain>cv. Columbia</strain>
    </source>
</reference>
<reference key="3">
    <citation type="journal article" date="2003" name="Science">
        <title>Empirical analysis of transcriptional activity in the Arabidopsis genome.</title>
        <authorList>
            <person name="Yamada K."/>
            <person name="Lim J."/>
            <person name="Dale J.M."/>
            <person name="Chen H."/>
            <person name="Shinn P."/>
            <person name="Palm C.J."/>
            <person name="Southwick A.M."/>
            <person name="Wu H.C."/>
            <person name="Kim C.J."/>
            <person name="Nguyen M."/>
            <person name="Pham P.K."/>
            <person name="Cheuk R.F."/>
            <person name="Karlin-Newmann G."/>
            <person name="Liu S.X."/>
            <person name="Lam B."/>
            <person name="Sakano H."/>
            <person name="Wu T."/>
            <person name="Yu G."/>
            <person name="Miranda M."/>
            <person name="Quach H.L."/>
            <person name="Tripp M."/>
            <person name="Chang C.H."/>
            <person name="Lee J.M."/>
            <person name="Toriumi M.J."/>
            <person name="Chan M.M."/>
            <person name="Tang C.C."/>
            <person name="Onodera C.S."/>
            <person name="Deng J.M."/>
            <person name="Akiyama K."/>
            <person name="Ansari Y."/>
            <person name="Arakawa T."/>
            <person name="Banh J."/>
            <person name="Banno F."/>
            <person name="Bowser L."/>
            <person name="Brooks S.Y."/>
            <person name="Carninci P."/>
            <person name="Chao Q."/>
            <person name="Choy N."/>
            <person name="Enju A."/>
            <person name="Goldsmith A.D."/>
            <person name="Gurjal M."/>
            <person name="Hansen N.F."/>
            <person name="Hayashizaki Y."/>
            <person name="Johnson-Hopson C."/>
            <person name="Hsuan V.W."/>
            <person name="Iida K."/>
            <person name="Karnes M."/>
            <person name="Khan S."/>
            <person name="Koesema E."/>
            <person name="Ishida J."/>
            <person name="Jiang P.X."/>
            <person name="Jones T."/>
            <person name="Kawai J."/>
            <person name="Kamiya A."/>
            <person name="Meyers C."/>
            <person name="Nakajima M."/>
            <person name="Narusaka M."/>
            <person name="Seki M."/>
            <person name="Sakurai T."/>
            <person name="Satou M."/>
            <person name="Tamse R."/>
            <person name="Vaysberg M."/>
            <person name="Wallender E.K."/>
            <person name="Wong C."/>
            <person name="Yamamura Y."/>
            <person name="Yuan S."/>
            <person name="Shinozaki K."/>
            <person name="Davis R.W."/>
            <person name="Theologis A."/>
            <person name="Ecker J.R."/>
        </authorList>
    </citation>
    <scope>NUCLEOTIDE SEQUENCE [LARGE SCALE MRNA]</scope>
    <source>
        <strain>cv. Columbia</strain>
    </source>
</reference>
<reference key="4">
    <citation type="journal article" date="2009" name="Proc. Natl. Acad. Sci. U.S.A.">
        <title>Heterodimeric geranyl(geranyl)diphosphate synthase from hop (Humulus lupulus) and the evolution of monoterpene biosynthesis.</title>
        <authorList>
            <person name="Wang G."/>
            <person name="Dixon R.A."/>
        </authorList>
    </citation>
    <scope>LACK OF INTERACTION WITH GGR</scope>
</reference>
<proteinExistence type="evidence at protein level"/>
<dbReference type="EC" id="2.5.1.-"/>
<dbReference type="EC" id="2.5.1.1"/>
<dbReference type="EC" id="2.5.1.29"/>
<dbReference type="EC" id="2.5.1.10"/>
<dbReference type="EMBL" id="AB023038">
    <property type="protein sequence ID" value="BAB02385.1"/>
    <property type="molecule type" value="Genomic_DNA"/>
</dbReference>
<dbReference type="EMBL" id="CP002686">
    <property type="protein sequence ID" value="AEE75535.1"/>
    <property type="molecule type" value="Genomic_DNA"/>
</dbReference>
<dbReference type="EMBL" id="BT010463">
    <property type="protein sequence ID" value="AAQ65086.1"/>
    <property type="molecule type" value="mRNA"/>
</dbReference>
<dbReference type="RefSeq" id="NP_188071.1">
    <property type="nucleotide sequence ID" value="NM_112313.3"/>
</dbReference>
<dbReference type="SMR" id="Q9LUE1"/>
<dbReference type="FunCoup" id="Q9LUE1">
    <property type="interactions" value="51"/>
</dbReference>
<dbReference type="STRING" id="3702.Q9LUE1"/>
<dbReference type="iPTMnet" id="Q9LUE1"/>
<dbReference type="PaxDb" id="3702-AT3G14530.1"/>
<dbReference type="ProteomicsDB" id="221844"/>
<dbReference type="EnsemblPlants" id="AT3G14530.1">
    <property type="protein sequence ID" value="AT3G14530.1"/>
    <property type="gene ID" value="AT3G14530"/>
</dbReference>
<dbReference type="GeneID" id="820678"/>
<dbReference type="Gramene" id="AT3G14530.1">
    <property type="protein sequence ID" value="AT3G14530.1"/>
    <property type="gene ID" value="AT3G14530"/>
</dbReference>
<dbReference type="KEGG" id="ath:AT3G14530"/>
<dbReference type="Araport" id="AT3G14530"/>
<dbReference type="TAIR" id="AT3G14530">
    <property type="gene designation" value="GFPPS1"/>
</dbReference>
<dbReference type="eggNOG" id="KOG0776">
    <property type="taxonomic scope" value="Eukaryota"/>
</dbReference>
<dbReference type="HOGENOM" id="CLU_014015_0_0_1"/>
<dbReference type="InParanoid" id="Q9LUE1"/>
<dbReference type="OMA" id="SYIAGRH"/>
<dbReference type="PhylomeDB" id="Q9LUE1"/>
<dbReference type="BioCyc" id="ARA:AT3G14530-MONOMER"/>
<dbReference type="BRENDA" id="2.5.1.81">
    <property type="organism ID" value="399"/>
</dbReference>
<dbReference type="UniPathway" id="UPA00259">
    <property type="reaction ID" value="UER00368"/>
</dbReference>
<dbReference type="UniPathway" id="UPA00260">
    <property type="reaction ID" value="UER00369"/>
</dbReference>
<dbReference type="UniPathway" id="UPA00389">
    <property type="reaction ID" value="UER00564"/>
</dbReference>
<dbReference type="PRO" id="PR:Q9LUE1"/>
<dbReference type="Proteomes" id="UP000006548">
    <property type="component" value="Chromosome 3"/>
</dbReference>
<dbReference type="ExpressionAtlas" id="Q9LUE1">
    <property type="expression patterns" value="baseline and differential"/>
</dbReference>
<dbReference type="GO" id="GO:0009507">
    <property type="term" value="C:chloroplast"/>
    <property type="evidence" value="ECO:0000314"/>
    <property type="project" value="TAIR"/>
</dbReference>
<dbReference type="GO" id="GO:0010287">
    <property type="term" value="C:plastoglobule"/>
    <property type="evidence" value="ECO:0000314"/>
    <property type="project" value="TAIR"/>
</dbReference>
<dbReference type="GO" id="GO:0004337">
    <property type="term" value="F:(2E,6E)-farnesyl diphosphate synthase activity"/>
    <property type="evidence" value="ECO:0007669"/>
    <property type="project" value="UniProtKB-EC"/>
</dbReference>
<dbReference type="GO" id="GO:0004161">
    <property type="term" value="F:dimethylallyltranstransferase activity"/>
    <property type="evidence" value="ECO:0007669"/>
    <property type="project" value="UniProtKB-EC"/>
</dbReference>
<dbReference type="GO" id="GO:0044687">
    <property type="term" value="F:geranylfarnesyl diphosphate synthase activity"/>
    <property type="evidence" value="ECO:0000314"/>
    <property type="project" value="TAIR"/>
</dbReference>
<dbReference type="GO" id="GO:0004311">
    <property type="term" value="F:geranylgeranyl diphosphate synthase activity"/>
    <property type="evidence" value="ECO:0007669"/>
    <property type="project" value="UniProtKB-EC"/>
</dbReference>
<dbReference type="GO" id="GO:0046872">
    <property type="term" value="F:metal ion binding"/>
    <property type="evidence" value="ECO:0007669"/>
    <property type="project" value="UniProtKB-KW"/>
</dbReference>
<dbReference type="GO" id="GO:0016117">
    <property type="term" value="P:carotenoid biosynthetic process"/>
    <property type="evidence" value="ECO:0007669"/>
    <property type="project" value="UniProtKB-KW"/>
</dbReference>
<dbReference type="GO" id="GO:0045337">
    <property type="term" value="P:farnesyl diphosphate biosynthetic process"/>
    <property type="evidence" value="ECO:0000314"/>
    <property type="project" value="TAIR"/>
</dbReference>
<dbReference type="GO" id="GO:0033384">
    <property type="term" value="P:geranyl diphosphate biosynthetic process"/>
    <property type="evidence" value="ECO:0007669"/>
    <property type="project" value="UniProtKB-UniPathway"/>
</dbReference>
<dbReference type="GO" id="GO:0033386">
    <property type="term" value="P:geranylgeranyl diphosphate biosynthetic process"/>
    <property type="evidence" value="ECO:0007669"/>
    <property type="project" value="UniProtKB-UniPathway"/>
</dbReference>
<dbReference type="CDD" id="cd00685">
    <property type="entry name" value="Trans_IPPS_HT"/>
    <property type="match status" value="1"/>
</dbReference>
<dbReference type="FunFam" id="1.10.600.10:FF:000001">
    <property type="entry name" value="Geranylgeranyl diphosphate synthase"/>
    <property type="match status" value="1"/>
</dbReference>
<dbReference type="Gene3D" id="1.10.600.10">
    <property type="entry name" value="Farnesyl Diphosphate Synthase"/>
    <property type="match status" value="1"/>
</dbReference>
<dbReference type="InterPro" id="IPR008949">
    <property type="entry name" value="Isoprenoid_synthase_dom_sf"/>
</dbReference>
<dbReference type="InterPro" id="IPR000092">
    <property type="entry name" value="Polyprenyl_synt"/>
</dbReference>
<dbReference type="InterPro" id="IPR033749">
    <property type="entry name" value="Polyprenyl_synt_CS"/>
</dbReference>
<dbReference type="InterPro" id="IPR053378">
    <property type="entry name" value="Prenyl_diphosphate_synthase"/>
</dbReference>
<dbReference type="NCBIfam" id="NF045485">
    <property type="entry name" value="FPPsyn"/>
    <property type="match status" value="1"/>
</dbReference>
<dbReference type="PANTHER" id="PTHR43281">
    <property type="entry name" value="FARNESYL DIPHOSPHATE SYNTHASE"/>
    <property type="match status" value="1"/>
</dbReference>
<dbReference type="PANTHER" id="PTHR43281:SF11">
    <property type="entry name" value="GERANYLGERANYL PYROPHOSPHATE SYNTHASE 11, CHLOROPLASTIC-RELATED"/>
    <property type="match status" value="1"/>
</dbReference>
<dbReference type="Pfam" id="PF00348">
    <property type="entry name" value="polyprenyl_synt"/>
    <property type="match status" value="1"/>
</dbReference>
<dbReference type="SFLD" id="SFLDS00005">
    <property type="entry name" value="Isoprenoid_Synthase_Type_I"/>
    <property type="match status" value="1"/>
</dbReference>
<dbReference type="SFLD" id="SFLDG01017">
    <property type="entry name" value="Polyprenyl_Transferase_Like"/>
    <property type="match status" value="1"/>
</dbReference>
<dbReference type="SUPFAM" id="SSF48576">
    <property type="entry name" value="Terpenoid synthases"/>
    <property type="match status" value="1"/>
</dbReference>
<dbReference type="PROSITE" id="PS00723">
    <property type="entry name" value="POLYPRENYL_SYNTHASE_1"/>
    <property type="match status" value="1"/>
</dbReference>
<dbReference type="PROSITE" id="PS00444">
    <property type="entry name" value="POLYPRENYL_SYNTHASE_2"/>
    <property type="match status" value="1"/>
</dbReference>
<sequence length="360" mass="38673">MATTVHLSSSSLFSQSRGRRDNSISSVKSLRKRTVLSLSSALTSQDAGHMIQPEGKSNDNNSAFDFKLYMIRKAESVNAALDVSVPLLKPLTIQEAVRYSLLAGGKRVRPLLCIAACELVGGDEATAMSAACAVEMIHTSSLIHDDLPCMDNADLRRGKPTNHKVYGEDMAVLAGDALLALAFEHMTVVSSGLVAPEKMIRAVVELARAIGTTGLVAGQMIDLASERLNPDKVGLEHLEFIHLHKTAALLEAAAVLGVIMGGGTEQEIEKLRKYARCIGLLFQVVDDILDVTKSTEELGKTAGKDVMAGKLTYPRLIGLEGSREVAEKLRREAEEQLLGFDPSKAAPLVALASYIACRHN</sequence>
<evidence type="ECO:0000250" key="1"/>
<evidence type="ECO:0000250" key="2">
    <source>
        <dbReference type="UniProtKB" id="P14324"/>
    </source>
</evidence>
<evidence type="ECO:0000250" key="3">
    <source>
        <dbReference type="UniProtKB" id="Q12051"/>
    </source>
</evidence>
<evidence type="ECO:0000255" key="4"/>
<evidence type="ECO:0000305" key="5"/>
<name>GGPP9_ARATH</name>
<feature type="transit peptide" description="Chloroplast" evidence="4">
    <location>
        <begin position="1"/>
        <end position="39"/>
    </location>
</feature>
<feature type="chain" id="PRO_0000402123" description="Geranylgeranyl pyrophosphate synthase 9, chloroplastic">
    <location>
        <begin position="40"/>
        <end position="360"/>
    </location>
</feature>
<feature type="binding site" evidence="2">
    <location>
        <position position="106"/>
    </location>
    <ligand>
        <name>isopentenyl diphosphate</name>
        <dbReference type="ChEBI" id="CHEBI:128769"/>
    </ligand>
</feature>
<feature type="binding site" evidence="2">
    <location>
        <position position="109"/>
    </location>
    <ligand>
        <name>isopentenyl diphosphate</name>
        <dbReference type="ChEBI" id="CHEBI:128769"/>
    </ligand>
</feature>
<feature type="binding site" evidence="3">
    <location>
        <position position="138"/>
    </location>
    <ligand>
        <name>isopentenyl diphosphate</name>
        <dbReference type="ChEBI" id="CHEBI:128769"/>
    </ligand>
</feature>
<feature type="binding site" evidence="2">
    <location>
        <position position="145"/>
    </location>
    <ligand>
        <name>Mg(2+)</name>
        <dbReference type="ChEBI" id="CHEBI:18420"/>
        <label>1</label>
    </ligand>
</feature>
<feature type="binding site" evidence="2">
    <location>
        <position position="145"/>
    </location>
    <ligand>
        <name>Mg(2+)</name>
        <dbReference type="ChEBI" id="CHEBI:18420"/>
        <label>2</label>
    </ligand>
</feature>
<feature type="binding site" evidence="2">
    <location>
        <position position="151"/>
    </location>
    <ligand>
        <name>Mg(2+)</name>
        <dbReference type="ChEBI" id="CHEBI:18420"/>
        <label>1</label>
    </ligand>
</feature>
<feature type="binding site" evidence="2">
    <location>
        <position position="151"/>
    </location>
    <ligand>
        <name>Mg(2+)</name>
        <dbReference type="ChEBI" id="CHEBI:18420"/>
        <label>2</label>
    </ligand>
</feature>
<feature type="binding site" evidence="1">
    <location>
        <position position="156"/>
    </location>
    <ligand>
        <name>dimethylallyl diphosphate</name>
        <dbReference type="ChEBI" id="CHEBI:57623"/>
    </ligand>
</feature>
<feature type="binding site" evidence="2">
    <location>
        <position position="157"/>
    </location>
    <ligand>
        <name>isopentenyl diphosphate</name>
        <dbReference type="ChEBI" id="CHEBI:128769"/>
    </ligand>
</feature>
<feature type="binding site" evidence="1">
    <location>
        <position position="245"/>
    </location>
    <ligand>
        <name>dimethylallyl diphosphate</name>
        <dbReference type="ChEBI" id="CHEBI:57623"/>
    </ligand>
</feature>
<feature type="binding site" evidence="1">
    <location>
        <position position="246"/>
    </location>
    <ligand>
        <name>dimethylallyl diphosphate</name>
        <dbReference type="ChEBI" id="CHEBI:57623"/>
    </ligand>
</feature>
<feature type="binding site" evidence="1">
    <location>
        <position position="283"/>
    </location>
    <ligand>
        <name>dimethylallyl diphosphate</name>
        <dbReference type="ChEBI" id="CHEBI:57623"/>
    </ligand>
</feature>
<feature type="binding site" evidence="1">
    <location>
        <position position="300"/>
    </location>
    <ligand>
        <name>dimethylallyl diphosphate</name>
        <dbReference type="ChEBI" id="CHEBI:57623"/>
    </ligand>
</feature>
<feature type="binding site" evidence="1">
    <location>
        <position position="310"/>
    </location>
    <ligand>
        <name>dimethylallyl diphosphate</name>
        <dbReference type="ChEBI" id="CHEBI:57623"/>
    </ligand>
</feature>